<sequence length="529" mass="58367">MKALFAAITMAHALLQTQASLQNPNLLPTPPMGFNNWARFMCDLNETLFVETADAMAANGLLAAGYNWLNLDDCWMTHQRAPNNSLMWNTTKFPRGLPWLGSYVKAKGFRFGIYEDAGNLTCGGYPGSLGHEELDARTFADWGVEYLKLDGCNVFPEGGRTSEQQYEHLYGLWHRILSGMPHPLVFSESAPAYFANEKNLSDWYTVMDWVPRYGELARHSTDILVYAGEGSAWDSIMVNYRYNTLVARYQRPGYYNDPDFLIPDHPGLTMDEKKSHFGLWASFAAPLIISAYIPGLSEEDIGYLTNRDLIAVDQDPLAQQATLASRDDEVDVLTRSLADGSRLVSVLNRGNSSVQRVIPLQWLGLNPGQRYQARNLWDGTEKRIRKDLTVTVRSHATEIYKFTGSNGRVDAVSTGIVFNTASGNCLTGDAAGVGFAPCTGGEKQIWQVRGSELRPLSLLGECLTADGTRLSLRPCAGDEAQMWSYHISGNLKSGHEGGCLTEGHGVASCGWELNSQVFGLPSGVRVSGY</sequence>
<accession>Q0CPK2</accession>
<name>AGALA_ASPTN</name>
<reference key="1">
    <citation type="submission" date="2005-09" db="EMBL/GenBank/DDBJ databases">
        <title>Annotation of the Aspergillus terreus NIH2624 genome.</title>
        <authorList>
            <person name="Birren B.W."/>
            <person name="Lander E.S."/>
            <person name="Galagan J.E."/>
            <person name="Nusbaum C."/>
            <person name="Devon K."/>
            <person name="Henn M."/>
            <person name="Ma L.-J."/>
            <person name="Jaffe D.B."/>
            <person name="Butler J."/>
            <person name="Alvarez P."/>
            <person name="Gnerre S."/>
            <person name="Grabherr M."/>
            <person name="Kleber M."/>
            <person name="Mauceli E.W."/>
            <person name="Brockman W."/>
            <person name="Rounsley S."/>
            <person name="Young S.K."/>
            <person name="LaButti K."/>
            <person name="Pushparaj V."/>
            <person name="DeCaprio D."/>
            <person name="Crawford M."/>
            <person name="Koehrsen M."/>
            <person name="Engels R."/>
            <person name="Montgomery P."/>
            <person name="Pearson M."/>
            <person name="Howarth C."/>
            <person name="Larson L."/>
            <person name="Luoma S."/>
            <person name="White J."/>
            <person name="Alvarado L."/>
            <person name="Kodira C.D."/>
            <person name="Zeng Q."/>
            <person name="Oleary S."/>
            <person name="Yandava C."/>
            <person name="Denning D.W."/>
            <person name="Nierman W.C."/>
            <person name="Milne T."/>
            <person name="Madden K."/>
        </authorList>
    </citation>
    <scope>NUCLEOTIDE SEQUENCE [LARGE SCALE GENOMIC DNA]</scope>
    <source>
        <strain>NIH 2624 / FGSC A1156</strain>
    </source>
</reference>
<comment type="function">
    <text evidence="1">Hydrolyzes a variety of simple alpha-D-galactoside as well as more complex molecules such as oligosaccharides and polysaccharides.</text>
</comment>
<comment type="catalytic activity">
    <reaction>
        <text>Hydrolysis of terminal, non-reducing alpha-D-galactose residues in alpha-D-galactosides, including galactose oligosaccharides, galactomannans and galactolipids.</text>
        <dbReference type="EC" id="3.2.1.22"/>
    </reaction>
</comment>
<comment type="subcellular location">
    <subcellularLocation>
        <location evidence="1">Secreted</location>
    </subcellularLocation>
</comment>
<comment type="similarity">
    <text evidence="4">Belongs to the glycosyl hydrolase 27 family.</text>
</comment>
<comment type="sequence caution" evidence="4">
    <conflict type="erroneous gene model prediction">
        <sequence resource="EMBL-CDS" id="EAU34829"/>
    </conflict>
</comment>
<proteinExistence type="inferred from homology"/>
<keyword id="KW-1015">Disulfide bond</keyword>
<keyword id="KW-0325">Glycoprotein</keyword>
<keyword id="KW-0326">Glycosidase</keyword>
<keyword id="KW-0378">Hydrolase</keyword>
<keyword id="KW-0430">Lectin</keyword>
<keyword id="KW-1185">Reference proteome</keyword>
<keyword id="KW-0964">Secreted</keyword>
<keyword id="KW-0732">Signal</keyword>
<dbReference type="EC" id="3.2.1.22"/>
<dbReference type="EMBL" id="CH476599">
    <property type="protein sequence ID" value="EAU34829.1"/>
    <property type="status" value="ALT_SEQ"/>
    <property type="molecule type" value="Genomic_DNA"/>
</dbReference>
<dbReference type="RefSeq" id="XP_001213560.1">
    <property type="nucleotide sequence ID" value="XM_001213560.1"/>
</dbReference>
<dbReference type="SMR" id="Q0CPK2"/>
<dbReference type="STRING" id="341663.Q0CPK2"/>
<dbReference type="GlyCosmos" id="Q0CPK2">
    <property type="glycosylation" value="6 sites, No reported glycans"/>
</dbReference>
<dbReference type="EnsemblFungi" id="EAU34829">
    <property type="protein sequence ID" value="EAU34829"/>
    <property type="gene ID" value="ATEG_04382"/>
</dbReference>
<dbReference type="GeneID" id="4320194"/>
<dbReference type="eggNOG" id="KOG2366">
    <property type="taxonomic scope" value="Eukaryota"/>
</dbReference>
<dbReference type="OrthoDB" id="5795902at2759"/>
<dbReference type="Proteomes" id="UP000007963">
    <property type="component" value="Unassembled WGS sequence"/>
</dbReference>
<dbReference type="GO" id="GO:0005576">
    <property type="term" value="C:extracellular region"/>
    <property type="evidence" value="ECO:0007669"/>
    <property type="project" value="UniProtKB-SubCell"/>
</dbReference>
<dbReference type="GO" id="GO:0004557">
    <property type="term" value="F:alpha-galactosidase activity"/>
    <property type="evidence" value="ECO:0007669"/>
    <property type="project" value="UniProtKB-EC"/>
</dbReference>
<dbReference type="GO" id="GO:0030246">
    <property type="term" value="F:carbohydrate binding"/>
    <property type="evidence" value="ECO:0007669"/>
    <property type="project" value="UniProtKB-KW"/>
</dbReference>
<dbReference type="GO" id="GO:0005975">
    <property type="term" value="P:carbohydrate metabolic process"/>
    <property type="evidence" value="ECO:0007669"/>
    <property type="project" value="InterPro"/>
</dbReference>
<dbReference type="CDD" id="cd23425">
    <property type="entry name" value="beta-trefoil_Ricin_AglA"/>
    <property type="match status" value="1"/>
</dbReference>
<dbReference type="CDD" id="cd14792">
    <property type="entry name" value="GH27"/>
    <property type="match status" value="1"/>
</dbReference>
<dbReference type="FunFam" id="3.20.20.70:FF:000177">
    <property type="entry name" value="Alpha-galactosidase"/>
    <property type="match status" value="1"/>
</dbReference>
<dbReference type="Gene3D" id="2.80.10.50">
    <property type="match status" value="1"/>
</dbReference>
<dbReference type="Gene3D" id="3.20.20.70">
    <property type="entry name" value="Aldolase class I"/>
    <property type="match status" value="1"/>
</dbReference>
<dbReference type="Gene3D" id="2.60.40.1180">
    <property type="entry name" value="Golgi alpha-mannosidase II"/>
    <property type="match status" value="1"/>
</dbReference>
<dbReference type="InterPro" id="IPR013785">
    <property type="entry name" value="Aldolase_TIM"/>
</dbReference>
<dbReference type="InterPro" id="IPR002241">
    <property type="entry name" value="Glyco_hydro_27"/>
</dbReference>
<dbReference type="InterPro" id="IPR013780">
    <property type="entry name" value="Glyco_hydro_b"/>
</dbReference>
<dbReference type="InterPro" id="IPR017853">
    <property type="entry name" value="Glycoside_hydrolase_SF"/>
</dbReference>
<dbReference type="InterPro" id="IPR041233">
    <property type="entry name" value="Melibiase_C"/>
</dbReference>
<dbReference type="InterPro" id="IPR035992">
    <property type="entry name" value="Ricin_B-like_lectins"/>
</dbReference>
<dbReference type="InterPro" id="IPR000772">
    <property type="entry name" value="Ricin_B_lectin"/>
</dbReference>
<dbReference type="PANTHER" id="PTHR11452:SF91">
    <property type="entry name" value="ALPHA-GALACTOSIDASE A-RELATED"/>
    <property type="match status" value="1"/>
</dbReference>
<dbReference type="PANTHER" id="PTHR11452">
    <property type="entry name" value="ALPHA-GALACTOSIDASE/ALPHA-N-ACETYLGALACTOSAMINIDASE"/>
    <property type="match status" value="1"/>
</dbReference>
<dbReference type="Pfam" id="PF16499">
    <property type="entry name" value="Melibiase_2"/>
    <property type="match status" value="1"/>
</dbReference>
<dbReference type="Pfam" id="PF17801">
    <property type="entry name" value="Melibiase_C"/>
    <property type="match status" value="1"/>
</dbReference>
<dbReference type="Pfam" id="PF00652">
    <property type="entry name" value="Ricin_B_lectin"/>
    <property type="match status" value="1"/>
</dbReference>
<dbReference type="PRINTS" id="PR00740">
    <property type="entry name" value="GLHYDRLASE27"/>
</dbReference>
<dbReference type="SMART" id="SM00458">
    <property type="entry name" value="RICIN"/>
    <property type="match status" value="1"/>
</dbReference>
<dbReference type="SUPFAM" id="SSF51445">
    <property type="entry name" value="(Trans)glycosidases"/>
    <property type="match status" value="1"/>
</dbReference>
<dbReference type="SUPFAM" id="SSF51011">
    <property type="entry name" value="Glycosyl hydrolase domain"/>
    <property type="match status" value="1"/>
</dbReference>
<dbReference type="SUPFAM" id="SSF50370">
    <property type="entry name" value="Ricin B-like lectins"/>
    <property type="match status" value="1"/>
</dbReference>
<dbReference type="PROSITE" id="PS50231">
    <property type="entry name" value="RICIN_B_LECTIN"/>
    <property type="match status" value="1"/>
</dbReference>
<feature type="signal peptide" evidence="2">
    <location>
        <begin position="1"/>
        <end position="19"/>
    </location>
</feature>
<feature type="chain" id="PRO_0000393211" description="Probable alpha-galactosidase A">
    <location>
        <begin position="20"/>
        <end position="529"/>
    </location>
</feature>
<feature type="domain" description="Ricin B-type lectin" evidence="3">
    <location>
        <begin position="408"/>
        <end position="528"/>
    </location>
</feature>
<feature type="active site" description="Nucleophile" evidence="1">
    <location>
        <position position="150"/>
    </location>
</feature>
<feature type="active site" description="Proton donor" evidence="1">
    <location>
        <position position="208"/>
    </location>
</feature>
<feature type="glycosylation site" description="N-linked (GlcNAc...) asparagine" evidence="2">
    <location>
        <position position="45"/>
    </location>
</feature>
<feature type="glycosylation site" description="N-linked (GlcNAc...) asparagine" evidence="2">
    <location>
        <position position="83"/>
    </location>
</feature>
<feature type="glycosylation site" description="N-linked (GlcNAc...) asparagine" evidence="2">
    <location>
        <position position="89"/>
    </location>
</feature>
<feature type="glycosylation site" description="N-linked (GlcNAc...) asparagine" evidence="2">
    <location>
        <position position="119"/>
    </location>
</feature>
<feature type="glycosylation site" description="N-linked (GlcNAc...) asparagine" evidence="2">
    <location>
        <position position="199"/>
    </location>
</feature>
<feature type="glycosylation site" description="N-linked (GlcNAc...) asparagine" evidence="2">
    <location>
        <position position="351"/>
    </location>
</feature>
<feature type="disulfide bond" evidence="3">
    <location>
        <begin position="42"/>
        <end position="74"/>
    </location>
</feature>
<feature type="disulfide bond" evidence="3">
    <location>
        <begin position="122"/>
        <end position="152"/>
    </location>
</feature>
<feature type="disulfide bond" evidence="3">
    <location>
        <begin position="425"/>
        <end position="438"/>
    </location>
</feature>
<feature type="disulfide bond" evidence="3">
    <location>
        <begin position="462"/>
        <end position="475"/>
    </location>
</feature>
<protein>
    <recommendedName>
        <fullName>Probable alpha-galactosidase A</fullName>
        <ecNumber>3.2.1.22</ecNumber>
    </recommendedName>
    <alternativeName>
        <fullName>Melibiase A</fullName>
    </alternativeName>
</protein>
<evidence type="ECO:0000250" key="1"/>
<evidence type="ECO:0000255" key="2"/>
<evidence type="ECO:0000255" key="3">
    <source>
        <dbReference type="PROSITE-ProRule" id="PRU00174"/>
    </source>
</evidence>
<evidence type="ECO:0000305" key="4"/>
<organism>
    <name type="scientific">Aspergillus terreus (strain NIH 2624 / FGSC A1156)</name>
    <dbReference type="NCBI Taxonomy" id="341663"/>
    <lineage>
        <taxon>Eukaryota</taxon>
        <taxon>Fungi</taxon>
        <taxon>Dikarya</taxon>
        <taxon>Ascomycota</taxon>
        <taxon>Pezizomycotina</taxon>
        <taxon>Eurotiomycetes</taxon>
        <taxon>Eurotiomycetidae</taxon>
        <taxon>Eurotiales</taxon>
        <taxon>Aspergillaceae</taxon>
        <taxon>Aspergillus</taxon>
        <taxon>Aspergillus subgen. Circumdati</taxon>
    </lineage>
</organism>
<gene>
    <name type="primary">aglA</name>
    <name type="ORF">ATEG_04382</name>
</gene>